<gene>
    <name evidence="1" type="primary">asnS</name>
    <name type="ordered locus">EcolC_2666</name>
</gene>
<comment type="catalytic activity">
    <reaction evidence="1">
        <text>tRNA(Asn) + L-asparagine + ATP = L-asparaginyl-tRNA(Asn) + AMP + diphosphate + H(+)</text>
        <dbReference type="Rhea" id="RHEA:11180"/>
        <dbReference type="Rhea" id="RHEA-COMP:9659"/>
        <dbReference type="Rhea" id="RHEA-COMP:9674"/>
        <dbReference type="ChEBI" id="CHEBI:15378"/>
        <dbReference type="ChEBI" id="CHEBI:30616"/>
        <dbReference type="ChEBI" id="CHEBI:33019"/>
        <dbReference type="ChEBI" id="CHEBI:58048"/>
        <dbReference type="ChEBI" id="CHEBI:78442"/>
        <dbReference type="ChEBI" id="CHEBI:78515"/>
        <dbReference type="ChEBI" id="CHEBI:456215"/>
        <dbReference type="EC" id="6.1.1.22"/>
    </reaction>
</comment>
<comment type="subunit">
    <text evidence="1">Homodimer.</text>
</comment>
<comment type="subcellular location">
    <subcellularLocation>
        <location evidence="1">Cytoplasm</location>
    </subcellularLocation>
</comment>
<comment type="similarity">
    <text evidence="1">Belongs to the class-II aminoacyl-tRNA synthetase family.</text>
</comment>
<keyword id="KW-0030">Aminoacyl-tRNA synthetase</keyword>
<keyword id="KW-0067">ATP-binding</keyword>
<keyword id="KW-0963">Cytoplasm</keyword>
<keyword id="KW-0436">Ligase</keyword>
<keyword id="KW-0547">Nucleotide-binding</keyword>
<keyword id="KW-0648">Protein biosynthesis</keyword>
<name>SYN_ECOLC</name>
<reference key="1">
    <citation type="submission" date="2008-02" db="EMBL/GenBank/DDBJ databases">
        <title>Complete sequence of Escherichia coli C str. ATCC 8739.</title>
        <authorList>
            <person name="Copeland A."/>
            <person name="Lucas S."/>
            <person name="Lapidus A."/>
            <person name="Glavina del Rio T."/>
            <person name="Dalin E."/>
            <person name="Tice H."/>
            <person name="Bruce D."/>
            <person name="Goodwin L."/>
            <person name="Pitluck S."/>
            <person name="Kiss H."/>
            <person name="Brettin T."/>
            <person name="Detter J.C."/>
            <person name="Han C."/>
            <person name="Kuske C.R."/>
            <person name="Schmutz J."/>
            <person name="Larimer F."/>
            <person name="Land M."/>
            <person name="Hauser L."/>
            <person name="Kyrpides N."/>
            <person name="Mikhailova N."/>
            <person name="Ingram L."/>
            <person name="Richardson P."/>
        </authorList>
    </citation>
    <scope>NUCLEOTIDE SEQUENCE [LARGE SCALE GENOMIC DNA]</scope>
    <source>
        <strain>ATCC 8739 / DSM 1576 / NBRC 3972 / NCIMB 8545 / WDCM 00012 / Crooks</strain>
    </source>
</reference>
<protein>
    <recommendedName>
        <fullName evidence="1">Asparagine--tRNA ligase</fullName>
        <ecNumber evidence="1">6.1.1.22</ecNumber>
    </recommendedName>
    <alternativeName>
        <fullName evidence="1">Asparaginyl-tRNA synthetase</fullName>
        <shortName evidence="1">AsnRS</shortName>
    </alternativeName>
</protein>
<accession>B1IW01</accession>
<feature type="chain" id="PRO_1000081848" description="Asparagine--tRNA ligase">
    <location>
        <begin position="1"/>
        <end position="466"/>
    </location>
</feature>
<evidence type="ECO:0000255" key="1">
    <source>
        <dbReference type="HAMAP-Rule" id="MF_00534"/>
    </source>
</evidence>
<organism>
    <name type="scientific">Escherichia coli (strain ATCC 8739 / DSM 1576 / NBRC 3972 / NCIMB 8545 / WDCM 00012 / Crooks)</name>
    <dbReference type="NCBI Taxonomy" id="481805"/>
    <lineage>
        <taxon>Bacteria</taxon>
        <taxon>Pseudomonadati</taxon>
        <taxon>Pseudomonadota</taxon>
        <taxon>Gammaproteobacteria</taxon>
        <taxon>Enterobacterales</taxon>
        <taxon>Enterobacteriaceae</taxon>
        <taxon>Escherichia</taxon>
    </lineage>
</organism>
<sequence length="466" mass="52570">MSVVPVADVLQGRVAVDSEVTVRGWVRTRRDSKAGISFLAVYDGSCFDPVQAVINNSLPNYNEDVLRLTTGCSVIVTGKVVASPGQGQQFEIQASKVEVAGWVEDPDTYPMAAKRHSIEYLREVAHLRPRTNLIGAVARVRHTLAQALHRFFNEQGFFWVSTPLITASDTEGAGEMFRVSTLDLENLPRNDQGKVDFDKDFFGKESFLTVSGQLNGETYACALSKIYTFGPTFRAENSNTSRHLAEFWMLEPEVAFANLNDIAGLAEAMLKYVFKAVLEERADDMKFFAERVDKDAVSRLERFIEADFAQVDYTDAVTILENCGRKFENPVYWGVDLSSEHERYLAEEHFKAPVVVKNYPKDIKAFYMRLNEDGKTVAAMDVLAPGIGEIIGGSQREERLDVLDERMLEMGLNKEDYWWYRDLRRYGTVPHSGFGLGFERLIAYVTGVQNVRDVIPFPRTPRNASF</sequence>
<dbReference type="EC" id="6.1.1.22" evidence="1"/>
<dbReference type="EMBL" id="CP000946">
    <property type="protein sequence ID" value="ACA78295.1"/>
    <property type="molecule type" value="Genomic_DNA"/>
</dbReference>
<dbReference type="RefSeq" id="WP_000117881.1">
    <property type="nucleotide sequence ID" value="NZ_MTFT01000009.1"/>
</dbReference>
<dbReference type="SMR" id="B1IW01"/>
<dbReference type="GeneID" id="93776484"/>
<dbReference type="KEGG" id="ecl:EcolC_2666"/>
<dbReference type="HOGENOM" id="CLU_004553_2_0_6"/>
<dbReference type="GO" id="GO:0005737">
    <property type="term" value="C:cytoplasm"/>
    <property type="evidence" value="ECO:0007669"/>
    <property type="project" value="UniProtKB-SubCell"/>
</dbReference>
<dbReference type="GO" id="GO:0004816">
    <property type="term" value="F:asparagine-tRNA ligase activity"/>
    <property type="evidence" value="ECO:0007669"/>
    <property type="project" value="UniProtKB-UniRule"/>
</dbReference>
<dbReference type="GO" id="GO:0005524">
    <property type="term" value="F:ATP binding"/>
    <property type="evidence" value="ECO:0007669"/>
    <property type="project" value="UniProtKB-UniRule"/>
</dbReference>
<dbReference type="GO" id="GO:0003676">
    <property type="term" value="F:nucleic acid binding"/>
    <property type="evidence" value="ECO:0007669"/>
    <property type="project" value="InterPro"/>
</dbReference>
<dbReference type="GO" id="GO:0006421">
    <property type="term" value="P:asparaginyl-tRNA aminoacylation"/>
    <property type="evidence" value="ECO:0007669"/>
    <property type="project" value="UniProtKB-UniRule"/>
</dbReference>
<dbReference type="CDD" id="cd00776">
    <property type="entry name" value="AsxRS_core"/>
    <property type="match status" value="1"/>
</dbReference>
<dbReference type="CDD" id="cd04318">
    <property type="entry name" value="EcAsnRS_like_N"/>
    <property type="match status" value="1"/>
</dbReference>
<dbReference type="FunFam" id="2.40.50.140:FF:000116">
    <property type="entry name" value="Asparagine--tRNA ligase"/>
    <property type="match status" value="1"/>
</dbReference>
<dbReference type="FunFam" id="3.30.930.10:FF:000016">
    <property type="entry name" value="Asparagine--tRNA ligase"/>
    <property type="match status" value="1"/>
</dbReference>
<dbReference type="Gene3D" id="3.30.930.10">
    <property type="entry name" value="Bira Bifunctional Protein, Domain 2"/>
    <property type="match status" value="1"/>
</dbReference>
<dbReference type="Gene3D" id="2.40.50.140">
    <property type="entry name" value="Nucleic acid-binding proteins"/>
    <property type="match status" value="1"/>
</dbReference>
<dbReference type="HAMAP" id="MF_00534">
    <property type="entry name" value="Asn_tRNA_synth"/>
    <property type="match status" value="1"/>
</dbReference>
<dbReference type="InterPro" id="IPR004364">
    <property type="entry name" value="Aa-tRNA-synt_II"/>
</dbReference>
<dbReference type="InterPro" id="IPR006195">
    <property type="entry name" value="aa-tRNA-synth_II"/>
</dbReference>
<dbReference type="InterPro" id="IPR045864">
    <property type="entry name" value="aa-tRNA-synth_II/BPL/LPL"/>
</dbReference>
<dbReference type="InterPro" id="IPR004522">
    <property type="entry name" value="Asn-tRNA-ligase"/>
</dbReference>
<dbReference type="InterPro" id="IPR002312">
    <property type="entry name" value="Asp/Asn-tRNA-synth_IIb"/>
</dbReference>
<dbReference type="InterPro" id="IPR012340">
    <property type="entry name" value="NA-bd_OB-fold"/>
</dbReference>
<dbReference type="InterPro" id="IPR004365">
    <property type="entry name" value="NA-bd_OB_tRNA"/>
</dbReference>
<dbReference type="NCBIfam" id="TIGR00457">
    <property type="entry name" value="asnS"/>
    <property type="match status" value="1"/>
</dbReference>
<dbReference type="NCBIfam" id="NF003037">
    <property type="entry name" value="PRK03932.1"/>
    <property type="match status" value="1"/>
</dbReference>
<dbReference type="PANTHER" id="PTHR22594:SF34">
    <property type="entry name" value="ASPARAGINE--TRNA LIGASE, MITOCHONDRIAL-RELATED"/>
    <property type="match status" value="1"/>
</dbReference>
<dbReference type="PANTHER" id="PTHR22594">
    <property type="entry name" value="ASPARTYL/LYSYL-TRNA SYNTHETASE"/>
    <property type="match status" value="1"/>
</dbReference>
<dbReference type="Pfam" id="PF00152">
    <property type="entry name" value="tRNA-synt_2"/>
    <property type="match status" value="1"/>
</dbReference>
<dbReference type="Pfam" id="PF01336">
    <property type="entry name" value="tRNA_anti-codon"/>
    <property type="match status" value="1"/>
</dbReference>
<dbReference type="PRINTS" id="PR01042">
    <property type="entry name" value="TRNASYNTHASP"/>
</dbReference>
<dbReference type="SUPFAM" id="SSF55681">
    <property type="entry name" value="Class II aaRS and biotin synthetases"/>
    <property type="match status" value="1"/>
</dbReference>
<dbReference type="SUPFAM" id="SSF50249">
    <property type="entry name" value="Nucleic acid-binding proteins"/>
    <property type="match status" value="1"/>
</dbReference>
<dbReference type="PROSITE" id="PS50862">
    <property type="entry name" value="AA_TRNA_LIGASE_II"/>
    <property type="match status" value="1"/>
</dbReference>
<proteinExistence type="inferred from homology"/>